<reference key="1">
    <citation type="journal article" date="2007" name="Curr. Biol.">
        <title>Reduced genome of the thioautotrophic intracellular symbiont in a deep-sea clam, Calyptogena okutanii.</title>
        <authorList>
            <person name="Kuwahara H."/>
            <person name="Yoshida T."/>
            <person name="Takaki Y."/>
            <person name="Shimamura S."/>
            <person name="Nishi S."/>
            <person name="Harada M."/>
            <person name="Matsuyama K."/>
            <person name="Takishita K."/>
            <person name="Kawato M."/>
            <person name="Uematsu K."/>
            <person name="Fujiwara Y."/>
            <person name="Sato T."/>
            <person name="Kato C."/>
            <person name="Kitagawa M."/>
            <person name="Kato I."/>
            <person name="Maruyama T."/>
        </authorList>
    </citation>
    <scope>NUCLEOTIDE SEQUENCE [LARGE SCALE GENOMIC DNA]</scope>
    <source>
        <strain>HA</strain>
    </source>
</reference>
<dbReference type="EC" id="4.2.1.10" evidence="1"/>
<dbReference type="EMBL" id="AP009247">
    <property type="protein sequence ID" value="BAF62056.1"/>
    <property type="molecule type" value="Genomic_DNA"/>
</dbReference>
<dbReference type="RefSeq" id="WP_011930325.1">
    <property type="nucleotide sequence ID" value="NC_009465.1"/>
</dbReference>
<dbReference type="SMR" id="A5CVG7"/>
<dbReference type="STRING" id="412965.COSY_0957"/>
<dbReference type="KEGG" id="vok:COSY_0957"/>
<dbReference type="eggNOG" id="COG0757">
    <property type="taxonomic scope" value="Bacteria"/>
</dbReference>
<dbReference type="HOGENOM" id="CLU_090968_3_0_6"/>
<dbReference type="OrthoDB" id="9790793at2"/>
<dbReference type="UniPathway" id="UPA00053">
    <property type="reaction ID" value="UER00086"/>
</dbReference>
<dbReference type="Proteomes" id="UP000000247">
    <property type="component" value="Chromosome"/>
</dbReference>
<dbReference type="GO" id="GO:0003855">
    <property type="term" value="F:3-dehydroquinate dehydratase activity"/>
    <property type="evidence" value="ECO:0007669"/>
    <property type="project" value="UniProtKB-UniRule"/>
</dbReference>
<dbReference type="GO" id="GO:0008652">
    <property type="term" value="P:amino acid biosynthetic process"/>
    <property type="evidence" value="ECO:0007669"/>
    <property type="project" value="UniProtKB-KW"/>
</dbReference>
<dbReference type="GO" id="GO:0009073">
    <property type="term" value="P:aromatic amino acid family biosynthetic process"/>
    <property type="evidence" value="ECO:0007669"/>
    <property type="project" value="UniProtKB-KW"/>
</dbReference>
<dbReference type="GO" id="GO:0009423">
    <property type="term" value="P:chorismate biosynthetic process"/>
    <property type="evidence" value="ECO:0007669"/>
    <property type="project" value="UniProtKB-UniRule"/>
</dbReference>
<dbReference type="GO" id="GO:0019631">
    <property type="term" value="P:quinate catabolic process"/>
    <property type="evidence" value="ECO:0007669"/>
    <property type="project" value="TreeGrafter"/>
</dbReference>
<dbReference type="CDD" id="cd00466">
    <property type="entry name" value="DHQase_II"/>
    <property type="match status" value="1"/>
</dbReference>
<dbReference type="Gene3D" id="3.40.50.9100">
    <property type="entry name" value="Dehydroquinase, class II"/>
    <property type="match status" value="1"/>
</dbReference>
<dbReference type="HAMAP" id="MF_00169">
    <property type="entry name" value="AroQ"/>
    <property type="match status" value="1"/>
</dbReference>
<dbReference type="InterPro" id="IPR001874">
    <property type="entry name" value="DHquinase_II"/>
</dbReference>
<dbReference type="InterPro" id="IPR018509">
    <property type="entry name" value="DHquinase_II_CS"/>
</dbReference>
<dbReference type="InterPro" id="IPR036441">
    <property type="entry name" value="DHquinase_II_sf"/>
</dbReference>
<dbReference type="NCBIfam" id="TIGR01088">
    <property type="entry name" value="aroQ"/>
    <property type="match status" value="1"/>
</dbReference>
<dbReference type="NCBIfam" id="NF003804">
    <property type="entry name" value="PRK05395.1-1"/>
    <property type="match status" value="1"/>
</dbReference>
<dbReference type="NCBIfam" id="NF003805">
    <property type="entry name" value="PRK05395.1-2"/>
    <property type="match status" value="1"/>
</dbReference>
<dbReference type="NCBIfam" id="NF003806">
    <property type="entry name" value="PRK05395.1-3"/>
    <property type="match status" value="1"/>
</dbReference>
<dbReference type="NCBIfam" id="NF003807">
    <property type="entry name" value="PRK05395.1-4"/>
    <property type="match status" value="1"/>
</dbReference>
<dbReference type="PANTHER" id="PTHR21272">
    <property type="entry name" value="CATABOLIC 3-DEHYDROQUINASE"/>
    <property type="match status" value="1"/>
</dbReference>
<dbReference type="PANTHER" id="PTHR21272:SF3">
    <property type="entry name" value="CATABOLIC 3-DEHYDROQUINASE"/>
    <property type="match status" value="1"/>
</dbReference>
<dbReference type="Pfam" id="PF01220">
    <property type="entry name" value="DHquinase_II"/>
    <property type="match status" value="1"/>
</dbReference>
<dbReference type="PIRSF" id="PIRSF001399">
    <property type="entry name" value="DHquinase_II"/>
    <property type="match status" value="1"/>
</dbReference>
<dbReference type="SUPFAM" id="SSF52304">
    <property type="entry name" value="Type II 3-dehydroquinate dehydratase"/>
    <property type="match status" value="1"/>
</dbReference>
<dbReference type="PROSITE" id="PS01029">
    <property type="entry name" value="DEHYDROQUINASE_II"/>
    <property type="match status" value="1"/>
</dbReference>
<comment type="function">
    <text evidence="1">Catalyzes a trans-dehydration via an enolate intermediate.</text>
</comment>
<comment type="catalytic activity">
    <reaction evidence="1">
        <text>3-dehydroquinate = 3-dehydroshikimate + H2O</text>
        <dbReference type="Rhea" id="RHEA:21096"/>
        <dbReference type="ChEBI" id="CHEBI:15377"/>
        <dbReference type="ChEBI" id="CHEBI:16630"/>
        <dbReference type="ChEBI" id="CHEBI:32364"/>
        <dbReference type="EC" id="4.2.1.10"/>
    </reaction>
</comment>
<comment type="pathway">
    <text evidence="1">Metabolic intermediate biosynthesis; chorismate biosynthesis; chorismate from D-erythrose 4-phosphate and phosphoenolpyruvate: step 3/7.</text>
</comment>
<comment type="subunit">
    <text evidence="1">Homododecamer.</text>
</comment>
<comment type="similarity">
    <text evidence="1">Belongs to the type-II 3-dehydroquinase family.</text>
</comment>
<evidence type="ECO:0000255" key="1">
    <source>
        <dbReference type="HAMAP-Rule" id="MF_00169"/>
    </source>
</evidence>
<name>AROQ_VESOH</name>
<accession>A5CVG7</accession>
<feature type="chain" id="PRO_1000077060" description="3-dehydroquinate dehydratase">
    <location>
        <begin position="1"/>
        <end position="149"/>
    </location>
</feature>
<feature type="active site" description="Proton acceptor" evidence="1">
    <location>
        <position position="22"/>
    </location>
</feature>
<feature type="active site" description="Proton donor" evidence="1">
    <location>
        <position position="100"/>
    </location>
</feature>
<feature type="binding site" evidence="1">
    <location>
        <position position="74"/>
    </location>
    <ligand>
        <name>substrate</name>
    </ligand>
</feature>
<feature type="binding site" evidence="1">
    <location>
        <position position="80"/>
    </location>
    <ligand>
        <name>substrate</name>
    </ligand>
</feature>
<feature type="binding site" evidence="1">
    <location>
        <position position="87"/>
    </location>
    <ligand>
        <name>substrate</name>
    </ligand>
</feature>
<feature type="binding site" evidence="1">
    <location>
        <begin position="101"/>
        <end position="102"/>
    </location>
    <ligand>
        <name>substrate</name>
    </ligand>
</feature>
<feature type="binding site" evidence="1">
    <location>
        <position position="111"/>
    </location>
    <ligand>
        <name>substrate</name>
    </ligand>
</feature>
<feature type="site" description="Transition state stabilizer" evidence="1">
    <location>
        <position position="17"/>
    </location>
</feature>
<gene>
    <name evidence="1" type="primary">aroQ</name>
    <name type="ordered locus">COSY_0957</name>
</gene>
<sequence>MDVLLLNGPNLNLLGSREPDYYGTQTLDDITSNLTKIANNVGLTFEHHQDNSEAKLIKYIHNAVDNGVQYIIINPAAFTHTSIALRDAILAVGIEFSEVHLSNIYKRENFRKQSYFSDIAQGIISGFGPQGYEFALQAAIQHIQQLERL</sequence>
<protein>
    <recommendedName>
        <fullName evidence="1">3-dehydroquinate dehydratase</fullName>
        <shortName evidence="1">3-dehydroquinase</shortName>
        <ecNumber evidence="1">4.2.1.10</ecNumber>
    </recommendedName>
    <alternativeName>
        <fullName evidence="1">Type II DHQase</fullName>
    </alternativeName>
</protein>
<organism>
    <name type="scientific">Vesicomyosocius okutanii subsp. Calyptogena okutanii (strain HA)</name>
    <dbReference type="NCBI Taxonomy" id="412965"/>
    <lineage>
        <taxon>Bacteria</taxon>
        <taxon>Pseudomonadati</taxon>
        <taxon>Pseudomonadota</taxon>
        <taxon>Gammaproteobacteria</taxon>
        <taxon>Candidatus Pseudothioglobaceae</taxon>
        <taxon>Candidatus Vesicomyosocius</taxon>
    </lineage>
</organism>
<keyword id="KW-0028">Amino-acid biosynthesis</keyword>
<keyword id="KW-0057">Aromatic amino acid biosynthesis</keyword>
<keyword id="KW-0456">Lyase</keyword>
<keyword id="KW-1185">Reference proteome</keyword>
<proteinExistence type="inferred from homology"/>